<sequence length="718" mass="79445">MAYRLLRALFRGLFRVTIDGVTDQFKHEKLIITPNHVSFLDGALLALFLPIKPVFAVYTSITDTWYMRWLKPYVDFVALDPTNPMAIKHLVRMVEQGRPVVIFPEGRITVTGSLMKIYDGAAFVAAKSGAAVVPIRLDGPEFTHFGRLQGVLKTRWFPKISIHVLPATTIPMPQAPRSRERRVLAGEHLHTIMMAARMATVPRETLFEALLSAQTRYGRFKPCIEDVSFKEDSYQTLLKKTLGVSRILQRFTVPGEHVGMLLPNATITAAAIFGASLRGRIPALLNYTSGAKGLQSAIIAASLKTIVTSRQFLEKGKLTHLPEQVNEVNWVYLEDLKDTVTLTDKLWILFHLCFPRRAMLPQQADDSALILFTSGSEGNPKGVVHSHASLLANVEQIRTIADFTPRDRFMSSLPLFHAFGLTVGLFTPLMTGSRVFLYPSPLHYRVVPELVYDRNCTVLFGTSTFLGNYARFAHPYDFARVRYVVAGAEKLAESTKQIWQDKFGIRILEGYGVTECAPVVAINVPMAAKVNTVGRILPGMEARLINVPGIAQGGRLQLRGPNIMRGYLRVENPGVLEQPSAENAQGELDANWYDTGDIVTLDEQGFCAIRGRVKRFAKLAGEMVSLESVEQLAISLSPEGQHAAAAKTDSAKGEALVLFTTDSEITRERLIKVARENGVPELAVPRDIRVVKALPLLGSGKPDFVTLGKMAQDPEMSV</sequence>
<organism>
    <name type="scientific">Yersinia pestis (strain Pestoides F)</name>
    <dbReference type="NCBI Taxonomy" id="386656"/>
    <lineage>
        <taxon>Bacteria</taxon>
        <taxon>Pseudomonadati</taxon>
        <taxon>Pseudomonadota</taxon>
        <taxon>Gammaproteobacteria</taxon>
        <taxon>Enterobacterales</taxon>
        <taxon>Yersiniaceae</taxon>
        <taxon>Yersinia</taxon>
    </lineage>
</organism>
<feature type="chain" id="PRO_1000065648" description="Bifunctional protein Aas">
    <location>
        <begin position="1"/>
        <end position="718"/>
    </location>
</feature>
<feature type="transmembrane region" description="Helical" evidence="1">
    <location>
        <begin position="258"/>
        <end position="277"/>
    </location>
</feature>
<feature type="transmembrane region" description="Helical" evidence="1">
    <location>
        <begin position="409"/>
        <end position="433"/>
    </location>
</feature>
<feature type="region of interest" description="Acyltransferase">
    <location>
        <begin position="15"/>
        <end position="138"/>
    </location>
</feature>
<feature type="region of interest" description="AMP-binding">
    <location>
        <begin position="233"/>
        <end position="646"/>
    </location>
</feature>
<feature type="active site" evidence="1">
    <location>
        <position position="36"/>
    </location>
</feature>
<proteinExistence type="inferred from homology"/>
<keyword id="KW-0012">Acyltransferase</keyword>
<keyword id="KW-0067">ATP-binding</keyword>
<keyword id="KW-0997">Cell inner membrane</keyword>
<keyword id="KW-1003">Cell membrane</keyword>
<keyword id="KW-0436">Ligase</keyword>
<keyword id="KW-0472">Membrane</keyword>
<keyword id="KW-0511">Multifunctional enzyme</keyword>
<keyword id="KW-0547">Nucleotide-binding</keyword>
<keyword id="KW-0808">Transferase</keyword>
<keyword id="KW-0812">Transmembrane</keyword>
<keyword id="KW-1133">Transmembrane helix</keyword>
<name>AAS_YERPP</name>
<comment type="function">
    <text evidence="1">Plays a role in lysophospholipid acylation. Transfers fatty acids to the 1-position via an enzyme-bound acyl-ACP intermediate in the presence of ATP and magnesium. Its physiological function is to regenerate phosphatidylethanolamine from 2-acyl-glycero-3-phosphoethanolamine (2-acyl-GPE) formed by transacylation reactions or degradation by phospholipase A1.</text>
</comment>
<comment type="catalytic activity">
    <reaction evidence="1">
        <text>a 2-acyl-sn-glycero-3-phosphoethanolamine + a fatty acyl-[ACP] = a 1,2-diacyl-sn-glycero-3-phosphoethanolamine + holo-[ACP]</text>
        <dbReference type="Rhea" id="RHEA:10304"/>
        <dbReference type="Rhea" id="RHEA-COMP:9685"/>
        <dbReference type="Rhea" id="RHEA-COMP:14125"/>
        <dbReference type="ChEBI" id="CHEBI:64479"/>
        <dbReference type="ChEBI" id="CHEBI:64612"/>
        <dbReference type="ChEBI" id="CHEBI:65213"/>
        <dbReference type="ChEBI" id="CHEBI:138651"/>
        <dbReference type="EC" id="2.3.1.40"/>
    </reaction>
</comment>
<comment type="catalytic activity">
    <reaction evidence="1">
        <text>a long-chain fatty acid + holo-[ACP] + ATP = a long-chain fatty acyl-[ACP] + AMP + diphosphate</text>
        <dbReference type="Rhea" id="RHEA:45588"/>
        <dbReference type="Rhea" id="RHEA-COMP:9685"/>
        <dbReference type="Rhea" id="RHEA-COMP:12682"/>
        <dbReference type="ChEBI" id="CHEBI:30616"/>
        <dbReference type="ChEBI" id="CHEBI:33019"/>
        <dbReference type="ChEBI" id="CHEBI:57560"/>
        <dbReference type="ChEBI" id="CHEBI:64479"/>
        <dbReference type="ChEBI" id="CHEBI:133243"/>
        <dbReference type="ChEBI" id="CHEBI:456215"/>
        <dbReference type="EC" id="6.2.1.20"/>
    </reaction>
</comment>
<comment type="subcellular location">
    <subcellularLocation>
        <location evidence="1">Cell inner membrane</location>
        <topology evidence="1">Multi-pass membrane protein</topology>
    </subcellularLocation>
</comment>
<comment type="similarity">
    <text evidence="1">In the N-terminal section; belongs to the 2-acyl-GPE acetyltransferase family.</text>
</comment>
<comment type="similarity">
    <text evidence="1">In the C-terminal section; belongs to the ATP-dependent AMP-binding enzyme family.</text>
</comment>
<evidence type="ECO:0000255" key="1">
    <source>
        <dbReference type="HAMAP-Rule" id="MF_01162"/>
    </source>
</evidence>
<accession>A4TLD3</accession>
<protein>
    <recommendedName>
        <fullName evidence="1">Bifunctional protein Aas</fullName>
    </recommendedName>
    <domain>
        <recommendedName>
            <fullName evidence="1">2-acylglycerophosphoethanolamine acyltransferase</fullName>
            <ecNumber evidence="1">2.3.1.40</ecNumber>
        </recommendedName>
        <alternativeName>
            <fullName evidence="1">2-acyl-GPE acyltransferase</fullName>
        </alternativeName>
        <alternativeName>
            <fullName evidence="1">Acyl-[acyl-carrier-protein]--phospholipid O-acyltransferase</fullName>
        </alternativeName>
    </domain>
    <domain>
        <recommendedName>
            <fullName evidence="1">Acyl-[acyl-carrier-protein] synthetase</fullName>
            <ecNumber evidence="1">6.2.1.20</ecNumber>
        </recommendedName>
        <alternativeName>
            <fullName evidence="1">Acyl-ACP synthetase</fullName>
        </alternativeName>
        <alternativeName>
            <fullName evidence="1">Long-chain-fatty-acid--[acyl-carrier-protein] ligase</fullName>
        </alternativeName>
    </domain>
</protein>
<gene>
    <name evidence="1" type="primary">aas</name>
    <name type="ordered locus">YPDSF_1710</name>
</gene>
<dbReference type="EC" id="2.3.1.40" evidence="1"/>
<dbReference type="EC" id="6.2.1.20" evidence="1"/>
<dbReference type="EMBL" id="CP000668">
    <property type="protein sequence ID" value="ABP40095.1"/>
    <property type="molecule type" value="Genomic_DNA"/>
</dbReference>
<dbReference type="RefSeq" id="WP_002230664.1">
    <property type="nucleotide sequence ID" value="NZ_CP009715.1"/>
</dbReference>
<dbReference type="SMR" id="A4TLD3"/>
<dbReference type="KEGG" id="ypp:YPDSF_1710"/>
<dbReference type="PATRIC" id="fig|386656.14.peg.2050"/>
<dbReference type="GO" id="GO:0005886">
    <property type="term" value="C:plasma membrane"/>
    <property type="evidence" value="ECO:0007669"/>
    <property type="project" value="UniProtKB-SubCell"/>
</dbReference>
<dbReference type="GO" id="GO:0008779">
    <property type="term" value="F:acyl-[acyl-carrier-protein]-phospholipid O-acyltransferase activity"/>
    <property type="evidence" value="ECO:0007669"/>
    <property type="project" value="UniProtKB-UniRule"/>
</dbReference>
<dbReference type="GO" id="GO:0005524">
    <property type="term" value="F:ATP binding"/>
    <property type="evidence" value="ECO:0007669"/>
    <property type="project" value="UniProtKB-KW"/>
</dbReference>
<dbReference type="GO" id="GO:0008922">
    <property type="term" value="F:long-chain fatty acid [acyl-carrier-protein] ligase activity"/>
    <property type="evidence" value="ECO:0007669"/>
    <property type="project" value="UniProtKB-UniRule"/>
</dbReference>
<dbReference type="GO" id="GO:0031956">
    <property type="term" value="F:medium-chain fatty acid-CoA ligase activity"/>
    <property type="evidence" value="ECO:0007669"/>
    <property type="project" value="TreeGrafter"/>
</dbReference>
<dbReference type="GO" id="GO:0006631">
    <property type="term" value="P:fatty acid metabolic process"/>
    <property type="evidence" value="ECO:0007669"/>
    <property type="project" value="InterPro"/>
</dbReference>
<dbReference type="GO" id="GO:0008654">
    <property type="term" value="P:phospholipid biosynthetic process"/>
    <property type="evidence" value="ECO:0007669"/>
    <property type="project" value="InterPro"/>
</dbReference>
<dbReference type="CDD" id="cd07989">
    <property type="entry name" value="LPLAT_AGPAT-like"/>
    <property type="match status" value="1"/>
</dbReference>
<dbReference type="Gene3D" id="3.30.300.30">
    <property type="match status" value="1"/>
</dbReference>
<dbReference type="Gene3D" id="3.40.50.12780">
    <property type="entry name" value="N-terminal domain of ligase-like"/>
    <property type="match status" value="1"/>
</dbReference>
<dbReference type="HAMAP" id="MF_01162">
    <property type="entry name" value="Aas"/>
    <property type="match status" value="1"/>
</dbReference>
<dbReference type="InterPro" id="IPR023775">
    <property type="entry name" value="Aas"/>
</dbReference>
<dbReference type="InterPro" id="IPR025110">
    <property type="entry name" value="AMP-bd_C"/>
</dbReference>
<dbReference type="InterPro" id="IPR045851">
    <property type="entry name" value="AMP-bd_C_sf"/>
</dbReference>
<dbReference type="InterPro" id="IPR020845">
    <property type="entry name" value="AMP-binding_CS"/>
</dbReference>
<dbReference type="InterPro" id="IPR000873">
    <property type="entry name" value="AMP-dep_synth/lig_dom"/>
</dbReference>
<dbReference type="InterPro" id="IPR042099">
    <property type="entry name" value="ANL_N_sf"/>
</dbReference>
<dbReference type="InterPro" id="IPR002123">
    <property type="entry name" value="Plipid/glycerol_acylTrfase"/>
</dbReference>
<dbReference type="NCBIfam" id="NF005959">
    <property type="entry name" value="PRK08043.1"/>
    <property type="match status" value="1"/>
</dbReference>
<dbReference type="PANTHER" id="PTHR43201">
    <property type="entry name" value="ACYL-COA SYNTHETASE"/>
    <property type="match status" value="1"/>
</dbReference>
<dbReference type="PANTHER" id="PTHR43201:SF5">
    <property type="entry name" value="MEDIUM-CHAIN ACYL-COA LIGASE ACSF2, MITOCHONDRIAL"/>
    <property type="match status" value="1"/>
</dbReference>
<dbReference type="Pfam" id="PF01553">
    <property type="entry name" value="Acyltransferase"/>
    <property type="match status" value="1"/>
</dbReference>
<dbReference type="Pfam" id="PF00501">
    <property type="entry name" value="AMP-binding"/>
    <property type="match status" value="1"/>
</dbReference>
<dbReference type="Pfam" id="PF13193">
    <property type="entry name" value="AMP-binding_C"/>
    <property type="match status" value="1"/>
</dbReference>
<dbReference type="SMART" id="SM00563">
    <property type="entry name" value="PlsC"/>
    <property type="match status" value="1"/>
</dbReference>
<dbReference type="SUPFAM" id="SSF56801">
    <property type="entry name" value="Acetyl-CoA synthetase-like"/>
    <property type="match status" value="1"/>
</dbReference>
<dbReference type="SUPFAM" id="SSF69593">
    <property type="entry name" value="Glycerol-3-phosphate (1)-acyltransferase"/>
    <property type="match status" value="1"/>
</dbReference>
<dbReference type="PROSITE" id="PS00455">
    <property type="entry name" value="AMP_BINDING"/>
    <property type="match status" value="1"/>
</dbReference>
<reference key="1">
    <citation type="submission" date="2007-02" db="EMBL/GenBank/DDBJ databases">
        <title>Complete sequence of chromosome of Yersinia pestis Pestoides F.</title>
        <authorList>
            <consortium name="US DOE Joint Genome Institute"/>
            <person name="Copeland A."/>
            <person name="Lucas S."/>
            <person name="Lapidus A."/>
            <person name="Barry K."/>
            <person name="Detter J.C."/>
            <person name="Glavina del Rio T."/>
            <person name="Hammon N."/>
            <person name="Israni S."/>
            <person name="Dalin E."/>
            <person name="Tice H."/>
            <person name="Pitluck S."/>
            <person name="Di Bartolo G."/>
            <person name="Chain P."/>
            <person name="Malfatti S."/>
            <person name="Shin M."/>
            <person name="Vergez L."/>
            <person name="Schmutz J."/>
            <person name="Larimer F."/>
            <person name="Land M."/>
            <person name="Hauser L."/>
            <person name="Worsham P."/>
            <person name="Chu M."/>
            <person name="Bearden S."/>
            <person name="Garcia E."/>
            <person name="Richardson P."/>
        </authorList>
    </citation>
    <scope>NUCLEOTIDE SEQUENCE [LARGE SCALE GENOMIC DNA]</scope>
    <source>
        <strain>Pestoides F</strain>
    </source>
</reference>